<dbReference type="EC" id="2.3.2.27"/>
<dbReference type="EMBL" id="AY740615">
    <property type="protein sequence ID" value="AAW72443.1"/>
    <property type="molecule type" value="mRNA"/>
</dbReference>
<dbReference type="EMBL" id="AY843518">
    <property type="protein sequence ID" value="AAV91989.1"/>
    <property type="molecule type" value="Genomic_DNA"/>
</dbReference>
<dbReference type="SMR" id="Q5C8U1"/>
<dbReference type="UniPathway" id="UPA00143"/>
<dbReference type="GO" id="GO:0005634">
    <property type="term" value="C:nucleus"/>
    <property type="evidence" value="ECO:0007669"/>
    <property type="project" value="UniProtKB-SubCell"/>
</dbReference>
<dbReference type="GO" id="GO:0000932">
    <property type="term" value="C:P-body"/>
    <property type="evidence" value="ECO:0000250"/>
    <property type="project" value="UniProtKB"/>
</dbReference>
<dbReference type="GO" id="GO:0038187">
    <property type="term" value="F:pattern recognition receptor activity"/>
    <property type="evidence" value="ECO:0000250"/>
    <property type="project" value="UniProtKB"/>
</dbReference>
<dbReference type="GO" id="GO:0004842">
    <property type="term" value="F:ubiquitin-protein transferase activity"/>
    <property type="evidence" value="ECO:0000250"/>
    <property type="project" value="UniProtKB"/>
</dbReference>
<dbReference type="GO" id="GO:0008270">
    <property type="term" value="F:zinc ion binding"/>
    <property type="evidence" value="ECO:0007669"/>
    <property type="project" value="UniProtKB-KW"/>
</dbReference>
<dbReference type="GO" id="GO:0002218">
    <property type="term" value="P:activation of innate immune response"/>
    <property type="evidence" value="ECO:0000250"/>
    <property type="project" value="UniProtKB"/>
</dbReference>
<dbReference type="GO" id="GO:0006914">
    <property type="term" value="P:autophagy"/>
    <property type="evidence" value="ECO:0007669"/>
    <property type="project" value="UniProtKB-KW"/>
</dbReference>
<dbReference type="GO" id="GO:0051607">
    <property type="term" value="P:defense response to virus"/>
    <property type="evidence" value="ECO:0007669"/>
    <property type="project" value="UniProtKB-KW"/>
</dbReference>
<dbReference type="GO" id="GO:0045087">
    <property type="term" value="P:innate immune response"/>
    <property type="evidence" value="ECO:0007669"/>
    <property type="project" value="UniProtKB-KW"/>
</dbReference>
<dbReference type="GO" id="GO:0043123">
    <property type="term" value="P:positive regulation of canonical NF-kappaB signal transduction"/>
    <property type="evidence" value="ECO:0000250"/>
    <property type="project" value="UniProtKB"/>
</dbReference>
<dbReference type="GO" id="GO:0043410">
    <property type="term" value="P:positive regulation of MAPK cascade"/>
    <property type="evidence" value="ECO:0000250"/>
    <property type="project" value="UniProtKB"/>
</dbReference>
<dbReference type="GO" id="GO:0051092">
    <property type="term" value="P:positive regulation of NF-kappaB transcription factor activity"/>
    <property type="evidence" value="ECO:0000250"/>
    <property type="project" value="UniProtKB"/>
</dbReference>
<dbReference type="GO" id="GO:0070534">
    <property type="term" value="P:protein K63-linked ubiquitination"/>
    <property type="evidence" value="ECO:0000250"/>
    <property type="project" value="UniProtKB"/>
</dbReference>
<dbReference type="GO" id="GO:0031664">
    <property type="term" value="P:regulation of lipopolysaccharide-mediated signaling pathway"/>
    <property type="evidence" value="ECO:0000250"/>
    <property type="project" value="UniProtKB"/>
</dbReference>
<dbReference type="CDD" id="cd19761">
    <property type="entry name" value="Bbox2_TRIM5-like"/>
    <property type="match status" value="1"/>
</dbReference>
<dbReference type="CDD" id="cd16591">
    <property type="entry name" value="RING-HC_TRIM5-like_C-IV"/>
    <property type="match status" value="1"/>
</dbReference>
<dbReference type="CDD" id="cd15822">
    <property type="entry name" value="SPRY_PRY_TRIM5"/>
    <property type="match status" value="1"/>
</dbReference>
<dbReference type="FunFam" id="2.60.120.920:FF:000023">
    <property type="entry name" value="Tripartite motif-containing 5 (Predicted)"/>
    <property type="match status" value="1"/>
</dbReference>
<dbReference type="FunFam" id="3.30.160.60:FF:000386">
    <property type="entry name" value="Tripartite motif-containing 5 (Predicted)"/>
    <property type="match status" value="1"/>
</dbReference>
<dbReference type="FunFam" id="3.30.40.10:FF:000144">
    <property type="entry name" value="Tripartite motif-containing 5 (Predicted)"/>
    <property type="match status" value="1"/>
</dbReference>
<dbReference type="Gene3D" id="2.60.120.920">
    <property type="match status" value="1"/>
</dbReference>
<dbReference type="Gene3D" id="3.30.160.60">
    <property type="entry name" value="Classic Zinc Finger"/>
    <property type="match status" value="1"/>
</dbReference>
<dbReference type="Gene3D" id="3.30.40.10">
    <property type="entry name" value="Zinc/RING finger domain, C3HC4 (zinc finger)"/>
    <property type="match status" value="1"/>
</dbReference>
<dbReference type="InterPro" id="IPR001870">
    <property type="entry name" value="B30.2/SPRY"/>
</dbReference>
<dbReference type="InterPro" id="IPR043136">
    <property type="entry name" value="B30.2/SPRY_sf"/>
</dbReference>
<dbReference type="InterPro" id="IPR003879">
    <property type="entry name" value="Butyrophylin_SPRY"/>
</dbReference>
<dbReference type="InterPro" id="IPR013320">
    <property type="entry name" value="ConA-like_dom_sf"/>
</dbReference>
<dbReference type="InterPro" id="IPR003877">
    <property type="entry name" value="SPRY_dom"/>
</dbReference>
<dbReference type="InterPro" id="IPR050143">
    <property type="entry name" value="TRIM/RBCC"/>
</dbReference>
<dbReference type="InterPro" id="IPR027370">
    <property type="entry name" value="Znf-RING_euk"/>
</dbReference>
<dbReference type="InterPro" id="IPR000315">
    <property type="entry name" value="Znf_B-box"/>
</dbReference>
<dbReference type="InterPro" id="IPR001841">
    <property type="entry name" value="Znf_RING"/>
</dbReference>
<dbReference type="InterPro" id="IPR013083">
    <property type="entry name" value="Znf_RING/FYVE/PHD"/>
</dbReference>
<dbReference type="InterPro" id="IPR017907">
    <property type="entry name" value="Znf_RING_CS"/>
</dbReference>
<dbReference type="PANTHER" id="PTHR24103">
    <property type="entry name" value="E3 UBIQUITIN-PROTEIN LIGASE TRIM"/>
    <property type="match status" value="1"/>
</dbReference>
<dbReference type="Pfam" id="PF00622">
    <property type="entry name" value="SPRY"/>
    <property type="match status" value="1"/>
</dbReference>
<dbReference type="Pfam" id="PF00643">
    <property type="entry name" value="zf-B_box"/>
    <property type="match status" value="1"/>
</dbReference>
<dbReference type="Pfam" id="PF13445">
    <property type="entry name" value="zf-RING_UBOX"/>
    <property type="match status" value="1"/>
</dbReference>
<dbReference type="PRINTS" id="PR01407">
    <property type="entry name" value="BUTYPHLNCDUF"/>
</dbReference>
<dbReference type="SMART" id="SM00336">
    <property type="entry name" value="BBOX"/>
    <property type="match status" value="1"/>
</dbReference>
<dbReference type="SMART" id="SM00184">
    <property type="entry name" value="RING"/>
    <property type="match status" value="1"/>
</dbReference>
<dbReference type="SMART" id="SM00449">
    <property type="entry name" value="SPRY"/>
    <property type="match status" value="1"/>
</dbReference>
<dbReference type="SUPFAM" id="SSF57845">
    <property type="entry name" value="B-box zinc-binding domain"/>
    <property type="match status" value="1"/>
</dbReference>
<dbReference type="SUPFAM" id="SSF49899">
    <property type="entry name" value="Concanavalin A-like lectins/glucanases"/>
    <property type="match status" value="1"/>
</dbReference>
<dbReference type="SUPFAM" id="SSF57850">
    <property type="entry name" value="RING/U-box"/>
    <property type="match status" value="1"/>
</dbReference>
<dbReference type="PROSITE" id="PS50188">
    <property type="entry name" value="B302_SPRY"/>
    <property type="match status" value="1"/>
</dbReference>
<dbReference type="PROSITE" id="PS50119">
    <property type="entry name" value="ZF_BBOX"/>
    <property type="match status" value="1"/>
</dbReference>
<dbReference type="PROSITE" id="PS00518">
    <property type="entry name" value="ZF_RING_1"/>
    <property type="match status" value="1"/>
</dbReference>
<dbReference type="PROSITE" id="PS50089">
    <property type="entry name" value="ZF_RING_2"/>
    <property type="match status" value="1"/>
</dbReference>
<evidence type="ECO:0000250" key="1"/>
<evidence type="ECO:0000250" key="2">
    <source>
        <dbReference type="UniProtKB" id="Q0PF16"/>
    </source>
</evidence>
<evidence type="ECO:0000250" key="3">
    <source>
        <dbReference type="UniProtKB" id="Q9C035"/>
    </source>
</evidence>
<evidence type="ECO:0000255" key="4"/>
<evidence type="ECO:0000255" key="5">
    <source>
        <dbReference type="PROSITE-ProRule" id="PRU00024"/>
    </source>
</evidence>
<evidence type="ECO:0000255" key="6">
    <source>
        <dbReference type="PROSITE-ProRule" id="PRU00175"/>
    </source>
</evidence>
<evidence type="ECO:0000255" key="7">
    <source>
        <dbReference type="PROSITE-ProRule" id="PRU00548"/>
    </source>
</evidence>
<evidence type="ECO:0000305" key="8"/>
<keyword id="KW-0007">Acetylation</keyword>
<keyword id="KW-0051">Antiviral defense</keyword>
<keyword id="KW-0072">Autophagy</keyword>
<keyword id="KW-0175">Coiled coil</keyword>
<keyword id="KW-0963">Cytoplasm</keyword>
<keyword id="KW-0391">Immunity</keyword>
<keyword id="KW-0399">Innate immunity</keyword>
<keyword id="KW-0479">Metal-binding</keyword>
<keyword id="KW-0539">Nucleus</keyword>
<keyword id="KW-0597">Phosphoprotein</keyword>
<keyword id="KW-0808">Transferase</keyword>
<keyword id="KW-0832">Ubl conjugation</keyword>
<keyword id="KW-0833">Ubl conjugation pathway</keyword>
<keyword id="KW-0862">Zinc</keyword>
<keyword id="KW-0863">Zinc-finger</keyword>
<comment type="function">
    <text evidence="3">Capsid-specific restriction factor that prevents infection from non-host-adapted retroviruses. Blocks viral replication early in the life cycle, after viral entry but before reverse transcription. In addition to acting as a capsid-specific restriction factor, also acts as a pattern recognition receptor that activates innate immune signaling in response to the retroviral capsid lattice. Binding to the viral capsid triggers its E3 ubiquitin ligase activity, and in concert with the heterodimeric ubiquitin conjugating enzyme complex UBE2V1-UBE2N (also known as UBC13-UEV1A complex) generates 'Lys-63'-linked polyubiquitin chains, which in turn are catalysts in the autophosphorylation of the MAP3K7/TAK1 complex (includes TAK1, TAB2, and TAB3). Activation of the MAP3K7/TAK1 complex by autophosphorylation results in the induction and expression of NF-kappa-B and MAPK-responsive inflammatory genes, thereby leading to an innate immune response in the infected cell. Plays a role in regulating autophagy through activation of autophagy regulator BECN1 by causing its dissociation from its inhibitors BCL2 and TAB2.</text>
</comment>
<comment type="catalytic activity">
    <reaction>
        <text>S-ubiquitinyl-[E2 ubiquitin-conjugating enzyme]-L-cysteine + [acceptor protein]-L-lysine = [E2 ubiquitin-conjugating enzyme]-L-cysteine + N(6)-ubiquitinyl-[acceptor protein]-L-lysine.</text>
        <dbReference type="EC" id="2.3.2.27"/>
    </reaction>
</comment>
<comment type="pathway">
    <text>Protein modification; protein ubiquitination.</text>
</comment>
<comment type="subunit">
    <text evidence="2 3">Can form homodimers and homotrimers. In addition to lower-order dimerization, also exhibits a higher-order multimerization and both low- and high-order multimerizations are essential for its restriction activity. Interacts with BTBD1 and BTBD2. Interacts with PSMC4, PSMC5, PSMD7 and HSPA8/HSC70. Interacts (via B30.2/SPRY domain) with HSPA1A/B. Interacts with PSMC2, MAP3K7/TAK1, TAB2 and TAB3. Interacts with SQSTM1. Interacts with TRIM6 and TRIM34. Interacts with ULK1 (phosphorylated form), GABARAP, GABARAPL1, GABARAPL2, MAP1LC3A, MAP1LC3C and BECN1.</text>
</comment>
<comment type="subcellular location">
    <subcellularLocation>
        <location evidence="2">Cytoplasm</location>
    </subcellularLocation>
    <subcellularLocation>
        <location evidence="2">Nucleus</location>
    </subcellularLocation>
    <text evidence="2">Predominantly localizes in cytoplasmic bodies. Localization may be influenced by the coexpression of other TRIM proteins, hence partial nuclear localization is observed in the presence of TRIM22 or TRIM27. In cytoplasmic bodies, colocalizes with proteasomal subunits and SQSTM1.</text>
</comment>
<comment type="domain">
    <text evidence="2 3">The B box-type zinc finger domain and the coiled-coil domain contribute to the higher and low order multimerization respectively which is essential for restriction activity. The coiled coil domain is important for higher order multimerization by promoting the initial dimerization.</text>
</comment>
<comment type="domain">
    <text evidence="1">The B30.2/SPRY domain acts as a capsid recognition domain. Polymorphisms in this domain explain the observed species-specific differences among orthologs (By similarity).</text>
</comment>
<comment type="domain">
    <text evidence="1">The RING-type zinc finger domain confers E3 ubiquitin ligase activity and is essential for retrovirus restriction activity, autoubiquitination and higher-order multimerization.</text>
</comment>
<comment type="PTM">
    <text evidence="1">Degraded in a proteasome-independent fashion in the absence of viral infection but in a proteasome-dependent fashion following exposure to restriction sensitive virus.</text>
</comment>
<comment type="PTM">
    <text evidence="1">Autoubiquitinated in a RING finger- and UBE2D2-dependent manner. Monoubiquitinated by TRIM21. Deubiquitinated by Yersinia YopJ. Ubiquitination may not lead to proteasomal degradation (By similarity).</text>
</comment>
<comment type="similarity">
    <text evidence="8">Belongs to the TRIM/RBCC family.</text>
</comment>
<proteinExistence type="evidence at transcript level"/>
<reference key="1">
    <citation type="journal article" date="2005" name="J. Virol.">
        <title>The B30.2(SPRY) domain of the retroviral restriction factor TRIM5alpha exhibits lineage-specific length and sequence variation in primates.</title>
        <authorList>
            <person name="Song B."/>
            <person name="Gold B."/>
            <person name="O'Huigin C."/>
            <person name="Javanbakht H."/>
            <person name="Li X."/>
            <person name="Stremlau M."/>
            <person name="Winkler C."/>
            <person name="Dean M."/>
            <person name="Sodroski J."/>
        </authorList>
    </citation>
    <scope>NUCLEOTIDE SEQUENCE [MRNA]</scope>
</reference>
<reference key="2">
    <citation type="journal article" date="2005" name="Proc. Natl. Acad. Sci. U.S.A.">
        <title>Positive selection of primate TRIM5alpha identifies a critical species-specific retroviral restriction domain.</title>
        <authorList>
            <person name="Sawyer S.L."/>
            <person name="Wu L.I."/>
            <person name="Emerman M."/>
            <person name="Malik H.S."/>
        </authorList>
    </citation>
    <scope>NUCLEOTIDE SEQUENCE [GENOMIC DNA]</scope>
</reference>
<sequence>MASGILVNIKEEVTCPICLELLTEPLSLDCGHSFCQACITANHKESTPHQGERSCPLCRMSYPSENLRPNRHLANIVERLKEVMLSPEEGQKVGHCARHGEKLLLFCEQDGNVICWLCERSQEHRGHHTLLVEEVAEKYQEKLQVALEMMRQKQQDAEKLEADVREEQASWKIQIRNDKTNIMAEFKQLRDILDCEESKELQNLEKEEKNILKRLVQSESDMVLQTQSMRVLISDLERRLQGSVLELLQGVDDVIKRIETVTLQKPKTFLNEKRRVFRAPDLKAMLQAFKELTEVQRYWAHVTLVPSHPSYAVISEDERQVRYQFQIHQPSVKVNYFYGVLGSPSITSGKHYWEVDVTNKRDWILGICVSFKCNAKWNVLRPENYQPKNGYWVIGLQNTNNYSAFQDAVKYSDFQIGSRSTASVPLIVPLFMTIYPNRVGVFLDYEACTVSFFNVTNNGFLIYKFSNCHFSYPVFPYFSPMTCELPMTLCSPSS</sequence>
<name>TRIM5_SAGLB</name>
<accession>Q5C8U1</accession>
<accession>Q5D7H9</accession>
<gene>
    <name type="primary">TRIM5</name>
</gene>
<organism>
    <name type="scientific">Saguinus labiatus</name>
    <name type="common">Red-chested mustached tamarin</name>
    <dbReference type="NCBI Taxonomy" id="78454"/>
    <lineage>
        <taxon>Eukaryota</taxon>
        <taxon>Metazoa</taxon>
        <taxon>Chordata</taxon>
        <taxon>Craniata</taxon>
        <taxon>Vertebrata</taxon>
        <taxon>Euteleostomi</taxon>
        <taxon>Mammalia</taxon>
        <taxon>Eutheria</taxon>
        <taxon>Euarchontoglires</taxon>
        <taxon>Primates</taxon>
        <taxon>Haplorrhini</taxon>
        <taxon>Platyrrhini</taxon>
        <taxon>Cebidae</taxon>
        <taxon>Callitrichinae</taxon>
        <taxon>Saguinus</taxon>
    </lineage>
</organism>
<feature type="initiator methionine" description="Removed" evidence="3">
    <location>
        <position position="1"/>
    </location>
</feature>
<feature type="chain" id="PRO_0000273474" description="Tripartite motif-containing protein 5">
    <location>
        <begin position="2"/>
        <end position="494"/>
    </location>
</feature>
<feature type="domain" description="B30.2/SPRY" evidence="7">
    <location>
        <begin position="280"/>
        <end position="494"/>
    </location>
</feature>
<feature type="zinc finger region" description="RING-type" evidence="6">
    <location>
        <begin position="15"/>
        <end position="59"/>
    </location>
</feature>
<feature type="zinc finger region" description="B box-type" evidence="5">
    <location>
        <begin position="91"/>
        <end position="132"/>
    </location>
</feature>
<feature type="region of interest" description="Required for interaction with GABARAP and for autophagy" evidence="2">
    <location>
        <begin position="186"/>
        <end position="199"/>
    </location>
</feature>
<feature type="coiled-coil region" evidence="4">
    <location>
        <begin position="131"/>
        <end position="223"/>
    </location>
</feature>
<feature type="binding site" evidence="5">
    <location>
        <position position="96"/>
    </location>
    <ligand>
        <name>Zn(2+)</name>
        <dbReference type="ChEBI" id="CHEBI:29105"/>
    </ligand>
</feature>
<feature type="binding site" evidence="5">
    <location>
        <position position="99"/>
    </location>
    <ligand>
        <name>Zn(2+)</name>
        <dbReference type="ChEBI" id="CHEBI:29105"/>
    </ligand>
</feature>
<feature type="binding site" evidence="5">
    <location>
        <position position="118"/>
    </location>
    <ligand>
        <name>Zn(2+)</name>
        <dbReference type="ChEBI" id="CHEBI:29105"/>
    </ligand>
</feature>
<feature type="binding site" evidence="5">
    <location>
        <position position="124"/>
    </location>
    <ligand>
        <name>Zn(2+)</name>
        <dbReference type="ChEBI" id="CHEBI:29105"/>
    </ligand>
</feature>
<feature type="modified residue" description="N-acetylalanine" evidence="3">
    <location>
        <position position="2"/>
    </location>
</feature>
<feature type="modified residue" description="Phosphoserine" evidence="3">
    <location>
        <position position="86"/>
    </location>
</feature>
<feature type="sequence conflict" description="In Ref. 2; AAV91989." evidence="8" ref="2">
    <original>G</original>
    <variation>R</variation>
    <location>
        <position position="4"/>
    </location>
</feature>
<protein>
    <recommendedName>
        <fullName>Tripartite motif-containing protein 5</fullName>
        <ecNumber>2.3.2.27</ecNumber>
    </recommendedName>
    <alternativeName>
        <fullName evidence="8">RING-type E3 ubiquitin transferase TRIM5</fullName>
    </alternativeName>
    <alternativeName>
        <fullName>TRIM5alpha</fullName>
    </alternativeName>
</protein>